<feature type="chain" id="PRO_0000231728" description="Imidazole glycerol phosphate synthase subunit HisH 1">
    <location>
        <begin position="1"/>
        <end position="213"/>
    </location>
</feature>
<feature type="domain" description="Glutamine amidotransferase type-1" evidence="1">
    <location>
        <begin position="3"/>
        <end position="213"/>
    </location>
</feature>
<feature type="active site" description="Nucleophile" evidence="1">
    <location>
        <position position="81"/>
    </location>
</feature>
<feature type="active site" evidence="1">
    <location>
        <position position="195"/>
    </location>
</feature>
<feature type="active site" evidence="1">
    <location>
        <position position="197"/>
    </location>
</feature>
<gene>
    <name evidence="1" type="primary">hisH1</name>
    <name type="ordered locus">lpl0787</name>
</gene>
<keyword id="KW-0028">Amino-acid biosynthesis</keyword>
<keyword id="KW-0963">Cytoplasm</keyword>
<keyword id="KW-0315">Glutamine amidotransferase</keyword>
<keyword id="KW-0368">Histidine biosynthesis</keyword>
<keyword id="KW-0378">Hydrolase</keyword>
<keyword id="KW-0456">Lyase</keyword>
<name>HIS51_LEGPL</name>
<sequence length="213" mass="23238">MSSVSILDYGVGNLLSVARAFQYFDASVNLVSTPEEIMSADRLVLPGVGAFEDGMKGLTTLNFIEPIKQFARSGKPFLGICLGMQMMLSKSTEFGQHEGLGLIAGEVVSVPSHGVDGQLHKIPHIGWNELVSTSEGEDWCHTILKNIPLNSSVYFVHSFMAMPSNPKKRLADTLYDGQAISAVIKDENMYGCQFHPEKSGEVGLSIIQQFLQI</sequence>
<organism>
    <name type="scientific">Legionella pneumophila (strain Lens)</name>
    <dbReference type="NCBI Taxonomy" id="297245"/>
    <lineage>
        <taxon>Bacteria</taxon>
        <taxon>Pseudomonadati</taxon>
        <taxon>Pseudomonadota</taxon>
        <taxon>Gammaproteobacteria</taxon>
        <taxon>Legionellales</taxon>
        <taxon>Legionellaceae</taxon>
        <taxon>Legionella</taxon>
    </lineage>
</organism>
<dbReference type="EC" id="4.3.2.10" evidence="1"/>
<dbReference type="EC" id="3.5.1.2" evidence="1"/>
<dbReference type="EMBL" id="CR628337">
    <property type="protein sequence ID" value="CAH15021.1"/>
    <property type="molecule type" value="Genomic_DNA"/>
</dbReference>
<dbReference type="RefSeq" id="WP_011214954.1">
    <property type="nucleotide sequence ID" value="NC_006369.1"/>
</dbReference>
<dbReference type="SMR" id="Q5WYE9"/>
<dbReference type="KEGG" id="lpf:lpl0787"/>
<dbReference type="LegioList" id="lpl0787"/>
<dbReference type="HOGENOM" id="CLU_071837_2_2_6"/>
<dbReference type="UniPathway" id="UPA00031">
    <property type="reaction ID" value="UER00010"/>
</dbReference>
<dbReference type="Proteomes" id="UP000002517">
    <property type="component" value="Chromosome"/>
</dbReference>
<dbReference type="GO" id="GO:0005737">
    <property type="term" value="C:cytoplasm"/>
    <property type="evidence" value="ECO:0007669"/>
    <property type="project" value="UniProtKB-SubCell"/>
</dbReference>
<dbReference type="GO" id="GO:0004359">
    <property type="term" value="F:glutaminase activity"/>
    <property type="evidence" value="ECO:0007669"/>
    <property type="project" value="UniProtKB-EC"/>
</dbReference>
<dbReference type="GO" id="GO:0000107">
    <property type="term" value="F:imidazoleglycerol-phosphate synthase activity"/>
    <property type="evidence" value="ECO:0007669"/>
    <property type="project" value="UniProtKB-UniRule"/>
</dbReference>
<dbReference type="GO" id="GO:0016829">
    <property type="term" value="F:lyase activity"/>
    <property type="evidence" value="ECO:0007669"/>
    <property type="project" value="UniProtKB-KW"/>
</dbReference>
<dbReference type="GO" id="GO:0000105">
    <property type="term" value="P:L-histidine biosynthetic process"/>
    <property type="evidence" value="ECO:0007669"/>
    <property type="project" value="UniProtKB-UniRule"/>
</dbReference>
<dbReference type="CDD" id="cd01748">
    <property type="entry name" value="GATase1_IGP_Synthase"/>
    <property type="match status" value="1"/>
</dbReference>
<dbReference type="Gene3D" id="3.40.50.880">
    <property type="match status" value="1"/>
</dbReference>
<dbReference type="HAMAP" id="MF_00278">
    <property type="entry name" value="HisH"/>
    <property type="match status" value="1"/>
</dbReference>
<dbReference type="InterPro" id="IPR029062">
    <property type="entry name" value="Class_I_gatase-like"/>
</dbReference>
<dbReference type="InterPro" id="IPR017926">
    <property type="entry name" value="GATASE"/>
</dbReference>
<dbReference type="InterPro" id="IPR010139">
    <property type="entry name" value="Imidazole-glycPsynth_HisH"/>
</dbReference>
<dbReference type="NCBIfam" id="TIGR01855">
    <property type="entry name" value="IMP_synth_hisH"/>
    <property type="match status" value="1"/>
</dbReference>
<dbReference type="PANTHER" id="PTHR42701">
    <property type="entry name" value="IMIDAZOLE GLYCEROL PHOSPHATE SYNTHASE SUBUNIT HISH"/>
    <property type="match status" value="1"/>
</dbReference>
<dbReference type="PANTHER" id="PTHR42701:SF1">
    <property type="entry name" value="IMIDAZOLE GLYCEROL PHOSPHATE SYNTHASE SUBUNIT HISH"/>
    <property type="match status" value="1"/>
</dbReference>
<dbReference type="Pfam" id="PF00117">
    <property type="entry name" value="GATase"/>
    <property type="match status" value="1"/>
</dbReference>
<dbReference type="PIRSF" id="PIRSF000495">
    <property type="entry name" value="Amidotransf_hisH"/>
    <property type="match status" value="1"/>
</dbReference>
<dbReference type="SUPFAM" id="SSF52317">
    <property type="entry name" value="Class I glutamine amidotransferase-like"/>
    <property type="match status" value="1"/>
</dbReference>
<dbReference type="PROSITE" id="PS51273">
    <property type="entry name" value="GATASE_TYPE_1"/>
    <property type="match status" value="1"/>
</dbReference>
<reference key="1">
    <citation type="journal article" date="2004" name="Nat. Genet.">
        <title>Evidence in the Legionella pneumophila genome for exploitation of host cell functions and high genome plasticity.</title>
        <authorList>
            <person name="Cazalet C."/>
            <person name="Rusniok C."/>
            <person name="Brueggemann H."/>
            <person name="Zidane N."/>
            <person name="Magnier A."/>
            <person name="Ma L."/>
            <person name="Tichit M."/>
            <person name="Jarraud S."/>
            <person name="Bouchier C."/>
            <person name="Vandenesch F."/>
            <person name="Kunst F."/>
            <person name="Etienne J."/>
            <person name="Glaser P."/>
            <person name="Buchrieser C."/>
        </authorList>
    </citation>
    <scope>NUCLEOTIDE SEQUENCE [LARGE SCALE GENOMIC DNA]</scope>
    <source>
        <strain>Lens</strain>
    </source>
</reference>
<protein>
    <recommendedName>
        <fullName evidence="1">Imidazole glycerol phosphate synthase subunit HisH 1</fullName>
        <ecNumber evidence="1">4.3.2.10</ecNumber>
    </recommendedName>
    <alternativeName>
        <fullName evidence="1">IGP synthase glutaminase subunit 1</fullName>
        <ecNumber evidence="1">3.5.1.2</ecNumber>
    </alternativeName>
    <alternativeName>
        <fullName evidence="1">IGP synthase subunit HisH 1</fullName>
    </alternativeName>
    <alternativeName>
        <fullName evidence="1">ImGP synthase subunit HisH 1</fullName>
        <shortName evidence="1">IGPS subunit HisH 1</shortName>
    </alternativeName>
</protein>
<comment type="function">
    <text evidence="1">IGPS catalyzes the conversion of PRFAR and glutamine to IGP, AICAR and glutamate. The HisH subunit provides the glutamine amidotransferase activity that produces the ammonia necessary to HisF for the synthesis of IGP and AICAR.</text>
</comment>
<comment type="catalytic activity">
    <reaction evidence="1">
        <text>5-[(5-phospho-1-deoxy-D-ribulos-1-ylimino)methylamino]-1-(5-phospho-beta-D-ribosyl)imidazole-4-carboxamide + L-glutamine = D-erythro-1-(imidazol-4-yl)glycerol 3-phosphate + 5-amino-1-(5-phospho-beta-D-ribosyl)imidazole-4-carboxamide + L-glutamate + H(+)</text>
        <dbReference type="Rhea" id="RHEA:24793"/>
        <dbReference type="ChEBI" id="CHEBI:15378"/>
        <dbReference type="ChEBI" id="CHEBI:29985"/>
        <dbReference type="ChEBI" id="CHEBI:58278"/>
        <dbReference type="ChEBI" id="CHEBI:58359"/>
        <dbReference type="ChEBI" id="CHEBI:58475"/>
        <dbReference type="ChEBI" id="CHEBI:58525"/>
        <dbReference type="EC" id="4.3.2.10"/>
    </reaction>
</comment>
<comment type="catalytic activity">
    <reaction evidence="1">
        <text>L-glutamine + H2O = L-glutamate + NH4(+)</text>
        <dbReference type="Rhea" id="RHEA:15889"/>
        <dbReference type="ChEBI" id="CHEBI:15377"/>
        <dbReference type="ChEBI" id="CHEBI:28938"/>
        <dbReference type="ChEBI" id="CHEBI:29985"/>
        <dbReference type="ChEBI" id="CHEBI:58359"/>
        <dbReference type="EC" id="3.5.1.2"/>
    </reaction>
</comment>
<comment type="pathway">
    <text evidence="1">Amino-acid biosynthesis; L-histidine biosynthesis; L-histidine from 5-phospho-alpha-D-ribose 1-diphosphate: step 5/9.</text>
</comment>
<comment type="subunit">
    <text evidence="1">Heterodimer of HisH and HisF.</text>
</comment>
<comment type="subcellular location">
    <subcellularLocation>
        <location evidence="1">Cytoplasm</location>
    </subcellularLocation>
</comment>
<evidence type="ECO:0000255" key="1">
    <source>
        <dbReference type="HAMAP-Rule" id="MF_00278"/>
    </source>
</evidence>
<proteinExistence type="inferred from homology"/>
<accession>Q5WYE9</accession>